<comment type="function">
    <text evidence="3">Acts as a component of the NMS (Ndc80-MIND-Spc7) super complex which has a role in kinetochore function during late meiotic prophase and throughout the mitotic cell cycle. Acts as a component of the essential kinetochore-associated NDC80 complex, which is required for chromosome segregation and spindle checkpoint activity.</text>
</comment>
<comment type="subunit">
    <text evidence="4 5">Component of the NDC80 complex, which consists of ndc80, nuf2, spc24 and spc25. Component of the NMS super complex which consists of mis12, mis13, mis14, ndc80, nnf1, nuf2, sos7, spc7, spc24 and spc25.</text>
</comment>
<comment type="interaction">
    <interactant intactId="EBI-1002524">
        <id>Q10198</id>
    </interactant>
    <interactant intactId="EBI-1002565">
        <id>Q10173</id>
        <label>nuf2</label>
    </interactant>
    <organismsDiffer>false</organismsDiffer>
    <experiments>3</experiments>
</comment>
<comment type="interaction">
    <interactant intactId="EBI-1002524">
        <id>Q10198</id>
    </interactant>
    <interactant intactId="EBI-1002585">
        <id>Q9UST6</id>
        <label>spc24</label>
    </interactant>
    <organismsDiffer>false</organismsDiffer>
    <experiments>3</experiments>
</comment>
<comment type="subcellular location">
    <subcellularLocation>
        <location>Nucleus</location>
    </subcellularLocation>
    <subcellularLocation>
        <location>Chromosome</location>
        <location>Centromere</location>
        <location>Kinetochore</location>
    </subcellularLocation>
    <text>Associated with kinetochores.</text>
</comment>
<comment type="similarity">
    <text evidence="6">Belongs to the NDC80/HEC1 family.</text>
</comment>
<accession>Q10198</accession>
<sequence length="624" mass="71859">MQDSSSYARRYSQAPSSSNLRTTTFGFNGLGTSRTSLAPQRTLVNARQSIDPDGLSSRVLTPTMRPSLAPNTRRSSVRVSNASFISQTPNITSIKDPRPLSDRRYQQECATQVVNYLLESGFSQPLGLNNRFMPSTREFAAIFKHLYNKLDPNFRFGARYEEDVTTCLKALNYPFLDSISRSRLVAIGSPHVWPAILGMLHWVVSLIQCTEKAVAMVYTVEQNSLDDHLVDKVLFDYLVRTYHLYLDESPEESEPEKELKATFNQQNQDLYNQTEALKSTNEELINQIKSAEELDSAIQVLEERYRTMQRDEVKFQSAMSGMKSKMESRTNLMKQLQVNIEEKESQLQLLKEKRDSLKYQVENQDISISEFEKMVSEREQLDRNLNMIGSKISELRKEVFDTDLLIQASIDSLEKKVQKFNSLAYRIGIVPIAAIRSANNDFELEINPEGPNYINLDLKNKVRPFINEVRRSITLEFHEEQNKSLKLQEHVDTVNDLIAELQDELRGIESRLTSVLSECNMLRETASEEKNAFDAESDKLERELQQLKLSSHNSMLQLDQRIQSINIEADQIAHACMEYKNNIYKEVAFVLGEIIHFKLHVQDSLEDLKMDYQKELDDLSRSEL</sequence>
<feature type="chain" id="PRO_0000116533" description="Kinetochore protein ndc80">
    <location>
        <begin position="1"/>
        <end position="624"/>
    </location>
</feature>
<feature type="region of interest" description="Disordered" evidence="2">
    <location>
        <begin position="1"/>
        <end position="25"/>
    </location>
</feature>
<feature type="region of interest" description="Disordered" evidence="2">
    <location>
        <begin position="46"/>
        <end position="73"/>
    </location>
</feature>
<feature type="coiled-coil region" evidence="1">
    <location>
        <begin position="263"/>
        <end position="399"/>
    </location>
</feature>
<feature type="coiled-coil region" evidence="1">
    <location>
        <begin position="484"/>
        <end position="560"/>
    </location>
</feature>
<dbReference type="EMBL" id="CU329671">
    <property type="protein sequence ID" value="CAA20685.1"/>
    <property type="molecule type" value="Genomic_DNA"/>
</dbReference>
<dbReference type="PIR" id="T39318">
    <property type="entry name" value="S67382"/>
</dbReference>
<dbReference type="RefSeq" id="NP_596392.1">
    <property type="nucleotide sequence ID" value="NM_001022313.2"/>
</dbReference>
<dbReference type="SMR" id="Q10198"/>
<dbReference type="BioGRID" id="276635">
    <property type="interactions" value="20"/>
</dbReference>
<dbReference type="ComplexPortal" id="CPX-549">
    <property type="entry name" value="Ndc80 complex"/>
</dbReference>
<dbReference type="FunCoup" id="Q10198">
    <property type="interactions" value="232"/>
</dbReference>
<dbReference type="IntAct" id="Q10198">
    <property type="interactions" value="4"/>
</dbReference>
<dbReference type="STRING" id="284812.Q10198"/>
<dbReference type="iPTMnet" id="Q10198"/>
<dbReference type="PaxDb" id="4896-SPBC11C11.03.1"/>
<dbReference type="EnsemblFungi" id="SPBC11C11.03.1">
    <property type="protein sequence ID" value="SPBC11C11.03.1:pep"/>
    <property type="gene ID" value="SPBC11C11.03"/>
</dbReference>
<dbReference type="GeneID" id="2540097"/>
<dbReference type="KEGG" id="spo:2540097"/>
<dbReference type="PomBase" id="SPBC11C11.03">
    <property type="gene designation" value="ndc80"/>
</dbReference>
<dbReference type="VEuPathDB" id="FungiDB:SPBC11C11.03"/>
<dbReference type="eggNOG" id="KOG0995">
    <property type="taxonomic scope" value="Eukaryota"/>
</dbReference>
<dbReference type="HOGENOM" id="CLU_012583_1_0_1"/>
<dbReference type="InParanoid" id="Q10198"/>
<dbReference type="OMA" id="PSHKFQK"/>
<dbReference type="PhylomeDB" id="Q10198"/>
<dbReference type="CD-CODE" id="576F0A76">
    <property type="entry name" value="Centrosome"/>
</dbReference>
<dbReference type="PRO" id="PR:Q10198"/>
<dbReference type="Proteomes" id="UP000002485">
    <property type="component" value="Chromosome II"/>
</dbReference>
<dbReference type="GO" id="GO:0000775">
    <property type="term" value="C:chromosome, centromeric region"/>
    <property type="evidence" value="ECO:0000314"/>
    <property type="project" value="PomBase"/>
</dbReference>
<dbReference type="GO" id="GO:0000779">
    <property type="term" value="C:condensed chromosome, centromeric region"/>
    <property type="evidence" value="ECO:0000314"/>
    <property type="project" value="PomBase"/>
</dbReference>
<dbReference type="GO" id="GO:0000776">
    <property type="term" value="C:kinetochore"/>
    <property type="evidence" value="ECO:0000314"/>
    <property type="project" value="PomBase"/>
</dbReference>
<dbReference type="GO" id="GO:0031262">
    <property type="term" value="C:Ndc80 complex"/>
    <property type="evidence" value="ECO:0000314"/>
    <property type="project" value="PomBase"/>
</dbReference>
<dbReference type="GO" id="GO:0005634">
    <property type="term" value="C:nucleus"/>
    <property type="evidence" value="ECO:0000305"/>
    <property type="project" value="PomBase"/>
</dbReference>
<dbReference type="GO" id="GO:0000940">
    <property type="term" value="C:outer kinetochore"/>
    <property type="evidence" value="ECO:0000314"/>
    <property type="project" value="PomBase"/>
</dbReference>
<dbReference type="GO" id="GO:0140483">
    <property type="term" value="F:kinetochore adaptor activity"/>
    <property type="evidence" value="ECO:0000315"/>
    <property type="project" value="PomBase"/>
</dbReference>
<dbReference type="GO" id="GO:0051315">
    <property type="term" value="P:attachment of mitotic spindle microtubules to kinetochore"/>
    <property type="evidence" value="ECO:0000314"/>
    <property type="project" value="PomBase"/>
</dbReference>
<dbReference type="GO" id="GO:0008608">
    <property type="term" value="P:attachment of spindle microtubules to kinetochore"/>
    <property type="evidence" value="ECO:0000303"/>
    <property type="project" value="ComplexPortal"/>
</dbReference>
<dbReference type="GO" id="GO:0051301">
    <property type="term" value="P:cell division"/>
    <property type="evidence" value="ECO:0007669"/>
    <property type="project" value="UniProtKB-KW"/>
</dbReference>
<dbReference type="GO" id="GO:0007059">
    <property type="term" value="P:chromosome segregation"/>
    <property type="evidence" value="ECO:0000303"/>
    <property type="project" value="ComplexPortal"/>
</dbReference>
<dbReference type="GO" id="GO:1990571">
    <property type="term" value="P:meiotic centromere clustering"/>
    <property type="evidence" value="ECO:0000315"/>
    <property type="project" value="PomBase"/>
</dbReference>
<dbReference type="GO" id="GO:1990758">
    <property type="term" value="P:mitotic sister chromatid biorientation"/>
    <property type="evidence" value="ECO:0000250"/>
    <property type="project" value="UniProtKB"/>
</dbReference>
<dbReference type="GO" id="GO:0051455">
    <property type="term" value="P:spindle attachment to meiosis I kinetochore"/>
    <property type="evidence" value="ECO:0000314"/>
    <property type="project" value="PomBase"/>
</dbReference>
<dbReference type="FunFam" id="1.10.418.30:FF:000001">
    <property type="entry name" value="Probable kinetochore protein ndc80"/>
    <property type="match status" value="1"/>
</dbReference>
<dbReference type="Gene3D" id="1.10.418.30">
    <property type="entry name" value="Ncd80 complex, Ncd80 subunit"/>
    <property type="match status" value="1"/>
</dbReference>
<dbReference type="InterPro" id="IPR005550">
    <property type="entry name" value="Kinetochore_Ndc80"/>
</dbReference>
<dbReference type="InterPro" id="IPR055260">
    <property type="entry name" value="Ndc80_CH"/>
</dbReference>
<dbReference type="InterPro" id="IPR038273">
    <property type="entry name" value="Ndc80_sf"/>
</dbReference>
<dbReference type="PANTHER" id="PTHR10643">
    <property type="entry name" value="KINETOCHORE PROTEIN NDC80"/>
    <property type="match status" value="1"/>
</dbReference>
<dbReference type="PANTHER" id="PTHR10643:SF2">
    <property type="entry name" value="KINETOCHORE PROTEIN NDC80 HOMOLOG"/>
    <property type="match status" value="1"/>
</dbReference>
<dbReference type="Pfam" id="PF03801">
    <property type="entry name" value="Ndc80_HEC"/>
    <property type="match status" value="1"/>
</dbReference>
<dbReference type="Pfam" id="PF24487">
    <property type="entry name" value="NDC80_loop"/>
    <property type="match status" value="1"/>
</dbReference>
<name>NDC80_SCHPO</name>
<keyword id="KW-0131">Cell cycle</keyword>
<keyword id="KW-0132">Cell division</keyword>
<keyword id="KW-0137">Centromere</keyword>
<keyword id="KW-0158">Chromosome</keyword>
<keyword id="KW-0175">Coiled coil</keyword>
<keyword id="KW-0995">Kinetochore</keyword>
<keyword id="KW-0469">Meiosis</keyword>
<keyword id="KW-0498">Mitosis</keyword>
<keyword id="KW-0539">Nucleus</keyword>
<keyword id="KW-1185">Reference proteome</keyword>
<reference key="1">
    <citation type="journal article" date="2002" name="Nature">
        <title>The genome sequence of Schizosaccharomyces pombe.</title>
        <authorList>
            <person name="Wood V."/>
            <person name="Gwilliam R."/>
            <person name="Rajandream M.A."/>
            <person name="Lyne M.H."/>
            <person name="Lyne R."/>
            <person name="Stewart A."/>
            <person name="Sgouros J.G."/>
            <person name="Peat N."/>
            <person name="Hayles J."/>
            <person name="Baker S.G."/>
            <person name="Basham D."/>
            <person name="Bowman S."/>
            <person name="Brooks K."/>
            <person name="Brown D."/>
            <person name="Brown S."/>
            <person name="Chillingworth T."/>
            <person name="Churcher C.M."/>
            <person name="Collins M."/>
            <person name="Connor R."/>
            <person name="Cronin A."/>
            <person name="Davis P."/>
            <person name="Feltwell T."/>
            <person name="Fraser A."/>
            <person name="Gentles S."/>
            <person name="Goble A."/>
            <person name="Hamlin N."/>
            <person name="Harris D.E."/>
            <person name="Hidalgo J."/>
            <person name="Hodgson G."/>
            <person name="Holroyd S."/>
            <person name="Hornsby T."/>
            <person name="Howarth S."/>
            <person name="Huckle E.J."/>
            <person name="Hunt S."/>
            <person name="Jagels K."/>
            <person name="James K.D."/>
            <person name="Jones L."/>
            <person name="Jones M."/>
            <person name="Leather S."/>
            <person name="McDonald S."/>
            <person name="McLean J."/>
            <person name="Mooney P."/>
            <person name="Moule S."/>
            <person name="Mungall K.L."/>
            <person name="Murphy L.D."/>
            <person name="Niblett D."/>
            <person name="Odell C."/>
            <person name="Oliver K."/>
            <person name="O'Neil S."/>
            <person name="Pearson D."/>
            <person name="Quail M.A."/>
            <person name="Rabbinowitsch E."/>
            <person name="Rutherford K.M."/>
            <person name="Rutter S."/>
            <person name="Saunders D."/>
            <person name="Seeger K."/>
            <person name="Sharp S."/>
            <person name="Skelton J."/>
            <person name="Simmonds M.N."/>
            <person name="Squares R."/>
            <person name="Squares S."/>
            <person name="Stevens K."/>
            <person name="Taylor K."/>
            <person name="Taylor R.G."/>
            <person name="Tivey A."/>
            <person name="Walsh S.V."/>
            <person name="Warren T."/>
            <person name="Whitehead S."/>
            <person name="Woodward J.R."/>
            <person name="Volckaert G."/>
            <person name="Aert R."/>
            <person name="Robben J."/>
            <person name="Grymonprez B."/>
            <person name="Weltjens I."/>
            <person name="Vanstreels E."/>
            <person name="Rieger M."/>
            <person name="Schaefer M."/>
            <person name="Mueller-Auer S."/>
            <person name="Gabel C."/>
            <person name="Fuchs M."/>
            <person name="Duesterhoeft A."/>
            <person name="Fritzc C."/>
            <person name="Holzer E."/>
            <person name="Moestl D."/>
            <person name="Hilbert H."/>
            <person name="Borzym K."/>
            <person name="Langer I."/>
            <person name="Beck A."/>
            <person name="Lehrach H."/>
            <person name="Reinhardt R."/>
            <person name="Pohl T.M."/>
            <person name="Eger P."/>
            <person name="Zimmermann W."/>
            <person name="Wedler H."/>
            <person name="Wambutt R."/>
            <person name="Purnelle B."/>
            <person name="Goffeau A."/>
            <person name="Cadieu E."/>
            <person name="Dreano S."/>
            <person name="Gloux S."/>
            <person name="Lelaure V."/>
            <person name="Mottier S."/>
            <person name="Galibert F."/>
            <person name="Aves S.J."/>
            <person name="Xiang Z."/>
            <person name="Hunt C."/>
            <person name="Moore K."/>
            <person name="Hurst S.M."/>
            <person name="Lucas M."/>
            <person name="Rochet M."/>
            <person name="Gaillardin C."/>
            <person name="Tallada V.A."/>
            <person name="Garzon A."/>
            <person name="Thode G."/>
            <person name="Daga R.R."/>
            <person name="Cruzado L."/>
            <person name="Jimenez J."/>
            <person name="Sanchez M."/>
            <person name="del Rey F."/>
            <person name="Benito J."/>
            <person name="Dominguez A."/>
            <person name="Revuelta J.L."/>
            <person name="Moreno S."/>
            <person name="Armstrong J."/>
            <person name="Forsburg S.L."/>
            <person name="Cerutti L."/>
            <person name="Lowe T."/>
            <person name="McCombie W.R."/>
            <person name="Paulsen I."/>
            <person name="Potashkin J."/>
            <person name="Shpakovski G.V."/>
            <person name="Ussery D."/>
            <person name="Barrell B.G."/>
            <person name="Nurse P."/>
        </authorList>
    </citation>
    <scope>NUCLEOTIDE SEQUENCE [LARGE SCALE GENOMIC DNA]</scope>
    <source>
        <strain>972 / ATCC 24843</strain>
    </source>
</reference>
<reference key="2">
    <citation type="journal article" date="2001" name="Mol. Biol. Cell">
        <title>The domain structure of centromeres is conserved from fission yeast to humans.</title>
        <authorList>
            <person name="Kniola B."/>
            <person name="O'Toole E."/>
            <person name="McIntosh J.R."/>
            <person name="Mellone B."/>
            <person name="Allshire R."/>
            <person name="Mengarelli S."/>
            <person name="Hultenby K."/>
            <person name="Ekwall K."/>
        </authorList>
    </citation>
    <scope>SUBCELLULAR LOCATION</scope>
</reference>
<reference key="3">
    <citation type="journal article" date="2003" name="J. Cell Sci.">
        <title>Distinct centromere domain structures with separate functions demonstrated in live fission yeast cells.</title>
        <authorList>
            <person name="Appelgren H."/>
            <person name="Kniola B."/>
            <person name="Ekwall K."/>
        </authorList>
    </citation>
    <scope>SUBCELLULAR LOCATION</scope>
</reference>
<reference key="4">
    <citation type="journal article" date="2005" name="EMBO J.">
        <title>Molecular analysis of kinetochore architecture in fission yeast.</title>
        <authorList>
            <person name="Liu X."/>
            <person name="McLeod I."/>
            <person name="Anderson S."/>
            <person name="Yates J.R. III"/>
            <person name="He X."/>
        </authorList>
    </citation>
    <scope>IDENTIFICATION IN THE NDC80 COMPLEX</scope>
    <scope>IDENTIFICATION IN THE NMS COMPLEX</scope>
    <scope>SUBCELLULAR LOCATION</scope>
</reference>
<reference key="5">
    <citation type="journal article" date="2005" name="Mol. Biol. Cell">
        <title>Dissociation of the Nuf2-Ndc80 complex releases centromeres from the spindle-pole body during meiotic prophase in fission yeast.</title>
        <authorList>
            <person name="Asakawa H."/>
            <person name="Hayashi A."/>
            <person name="Haraguchi T."/>
            <person name="Hiraoka Y."/>
        </authorList>
    </citation>
    <scope>FUNCTION OF THE NDC80 COMPLEX</scope>
    <scope>INTERACTION WITH NUF2; SPC24 AND SPC25</scope>
    <scope>SUBCELLULAR LOCATION</scope>
</reference>
<reference key="6">
    <citation type="journal article" date="2006" name="Mol. Biol. Cell">
        <title>Reconstruction of the kinetochore during meiosis in fission yeast Schizosaccharomyces pombe.</title>
        <authorList>
            <person name="Hayashi A."/>
            <person name="Asakawa H."/>
            <person name="Haraguchi T."/>
            <person name="Hiraoka Y."/>
        </authorList>
    </citation>
    <scope>IDENTIFICATION IN THE NMS COMPLEX</scope>
</reference>
<reference key="7">
    <citation type="journal article" date="2006" name="Nat. Biotechnol.">
        <title>ORFeome cloning and global analysis of protein localization in the fission yeast Schizosaccharomyces pombe.</title>
        <authorList>
            <person name="Matsuyama A."/>
            <person name="Arai R."/>
            <person name="Yashiroda Y."/>
            <person name="Shirai A."/>
            <person name="Kamata A."/>
            <person name="Sekido S."/>
            <person name="Kobayashi Y."/>
            <person name="Hashimoto A."/>
            <person name="Hamamoto M."/>
            <person name="Hiraoka Y."/>
            <person name="Horinouchi S."/>
            <person name="Yoshida M."/>
        </authorList>
    </citation>
    <scope>SUBCELLULAR LOCATION [LARGE SCALE ANALYSIS]</scope>
</reference>
<proteinExistence type="evidence at protein level"/>
<evidence type="ECO:0000255" key="1"/>
<evidence type="ECO:0000256" key="2">
    <source>
        <dbReference type="SAM" id="MobiDB-lite"/>
    </source>
</evidence>
<evidence type="ECO:0000269" key="3">
    <source>
    </source>
</evidence>
<evidence type="ECO:0000269" key="4">
    <source>
    </source>
</evidence>
<evidence type="ECO:0000269" key="5">
    <source>
    </source>
</evidence>
<evidence type="ECO:0000305" key="6"/>
<organism>
    <name type="scientific">Schizosaccharomyces pombe (strain 972 / ATCC 24843)</name>
    <name type="common">Fission yeast</name>
    <dbReference type="NCBI Taxonomy" id="284812"/>
    <lineage>
        <taxon>Eukaryota</taxon>
        <taxon>Fungi</taxon>
        <taxon>Dikarya</taxon>
        <taxon>Ascomycota</taxon>
        <taxon>Taphrinomycotina</taxon>
        <taxon>Schizosaccharomycetes</taxon>
        <taxon>Schizosaccharomycetales</taxon>
        <taxon>Schizosaccharomycetaceae</taxon>
        <taxon>Schizosaccharomyces</taxon>
    </lineage>
</organism>
<gene>
    <name type="primary">ndc80</name>
    <name type="synonym">ndc10</name>
    <name type="synonym">tid3</name>
    <name type="ORF">SPBC11C11.03</name>
</gene>
<protein>
    <recommendedName>
        <fullName>Kinetochore protein ndc80</fullName>
    </recommendedName>
    <alternativeName>
        <fullName>NMS complex subunit ndc80</fullName>
    </alternativeName>
</protein>